<reference key="1">
    <citation type="journal article" date="1999" name="DNA Res.">
        <title>Complete genome sequence of an aerobic hyper-thermophilic crenarchaeon, Aeropyrum pernix K1.</title>
        <authorList>
            <person name="Kawarabayasi Y."/>
            <person name="Hino Y."/>
            <person name="Horikawa H."/>
            <person name="Yamazaki S."/>
            <person name="Haikawa Y."/>
            <person name="Jin-no K."/>
            <person name="Takahashi M."/>
            <person name="Sekine M."/>
            <person name="Baba S."/>
            <person name="Ankai A."/>
            <person name="Kosugi H."/>
            <person name="Hosoyama A."/>
            <person name="Fukui S."/>
            <person name="Nagai Y."/>
            <person name="Nishijima K."/>
            <person name="Nakazawa H."/>
            <person name="Takamiya M."/>
            <person name="Masuda S."/>
            <person name="Funahashi T."/>
            <person name="Tanaka T."/>
            <person name="Kudoh Y."/>
            <person name="Yamazaki J."/>
            <person name="Kushida N."/>
            <person name="Oguchi A."/>
            <person name="Aoki K."/>
            <person name="Kubota K."/>
            <person name="Nakamura Y."/>
            <person name="Nomura N."/>
            <person name="Sako Y."/>
            <person name="Kikuchi H."/>
        </authorList>
    </citation>
    <scope>NUCLEOTIDE SEQUENCE [LARGE SCALE GENOMIC DNA]</scope>
    <source>
        <strain>ATCC 700893 / DSM 11879 / JCM 9820 / NBRC 100138 / K1</strain>
    </source>
</reference>
<gene>
    <name type="primary">pyrD</name>
    <name type="ordered locus">APE_0260.1</name>
</gene>
<protein>
    <recommendedName>
        <fullName>Putative dihydroorotate dehydrogenase A (fumarate)</fullName>
        <shortName>DHOD A</shortName>
        <shortName>DHODase A</shortName>
        <shortName>DHOdehase A</shortName>
        <ecNumber>1.3.98.1</ecNumber>
    </recommendedName>
</protein>
<sequence length="306" mass="32121">MYSQPELSISIAGLRLQRPVGNASGILGWEPREARLVEEGGGGFFVAKSVTYQPRKGYPQPHLYPVAGGIVNAVGLANPGFREASKMLAQTVEEASIPVIASIAGGAPGEWVEMASTLEEAGVSAVELNLSCPHFAGGGLELGQDPAAVASVVSAVASTLRIPVIAKLGYSDRLVDAASKALEAGARGLTLINSMRAMKIDVYAKKPVLGNRVGGLSGKPIHPIAVRAVYEVYGETRADIFAAGGVESWEDAVEFYLAGAKAVQVGAAFITIGPHVLRSIVEGVRRYLWVEGFRSLQDIVGYAHRA</sequence>
<organism>
    <name type="scientific">Aeropyrum pernix (strain ATCC 700893 / DSM 11879 / JCM 9820 / NBRC 100138 / K1)</name>
    <dbReference type="NCBI Taxonomy" id="272557"/>
    <lineage>
        <taxon>Archaea</taxon>
        <taxon>Thermoproteota</taxon>
        <taxon>Thermoprotei</taxon>
        <taxon>Desulfurococcales</taxon>
        <taxon>Desulfurococcaceae</taxon>
        <taxon>Aeropyrum</taxon>
    </lineage>
</organism>
<evidence type="ECO:0000250" key="1"/>
<evidence type="ECO:0000305" key="2"/>
<comment type="function">
    <text evidence="1">Catalyzes the conversion of dihydroorotate to orotate with fumarate as the electron acceptor.</text>
</comment>
<comment type="catalytic activity">
    <reaction>
        <text>(S)-dihydroorotate + fumarate = orotate + succinate</text>
        <dbReference type="Rhea" id="RHEA:30059"/>
        <dbReference type="ChEBI" id="CHEBI:29806"/>
        <dbReference type="ChEBI" id="CHEBI:30031"/>
        <dbReference type="ChEBI" id="CHEBI:30839"/>
        <dbReference type="ChEBI" id="CHEBI:30864"/>
        <dbReference type="EC" id="1.3.98.1"/>
    </reaction>
</comment>
<comment type="cofactor">
    <cofactor evidence="1">
        <name>FMN</name>
        <dbReference type="ChEBI" id="CHEBI:58210"/>
    </cofactor>
    <text evidence="1">Binds 1 FMN per subunit.</text>
</comment>
<comment type="pathway">
    <text>Pyrimidine metabolism; UMP biosynthesis via de novo pathway.</text>
</comment>
<comment type="subunit">
    <text evidence="1">Homodimer.</text>
</comment>
<comment type="subcellular location">
    <subcellularLocation>
        <location evidence="1">Cytoplasm</location>
    </subcellularLocation>
</comment>
<comment type="similarity">
    <text evidence="2">Belongs to the dihydroorotate dehydrogenase family. Type 1 subfamily.</text>
</comment>
<keyword id="KW-0963">Cytoplasm</keyword>
<keyword id="KW-0285">Flavoprotein</keyword>
<keyword id="KW-0288">FMN</keyword>
<keyword id="KW-0560">Oxidoreductase</keyword>
<keyword id="KW-0665">Pyrimidine biosynthesis</keyword>
<keyword id="KW-1185">Reference proteome</keyword>
<proteinExistence type="inferred from homology"/>
<name>PYRDA_AERPE</name>
<feature type="chain" id="PRO_0000148406" description="Putative dihydroorotate dehydrogenase A (fumarate)">
    <location>
        <begin position="1"/>
        <end position="306"/>
    </location>
</feature>
<feature type="active site" description="Nucleophile">
    <location>
        <position position="132"/>
    </location>
</feature>
<feature type="binding site" evidence="1">
    <location>
        <position position="24"/>
    </location>
    <ligand>
        <name>FMN</name>
        <dbReference type="ChEBI" id="CHEBI:58210"/>
    </ligand>
</feature>
<feature type="binding site" evidence="1">
    <location>
        <begin position="48"/>
        <end position="49"/>
    </location>
    <ligand>
        <name>FMN</name>
        <dbReference type="ChEBI" id="CHEBI:58210"/>
    </ligand>
</feature>
<feature type="binding site" evidence="1">
    <location>
        <position position="48"/>
    </location>
    <ligand>
        <name>substrate</name>
    </ligand>
</feature>
<feature type="binding site" evidence="1">
    <location>
        <begin position="72"/>
        <end position="76"/>
    </location>
    <ligand>
        <name>substrate</name>
    </ligand>
</feature>
<feature type="binding site" evidence="1">
    <location>
        <position position="129"/>
    </location>
    <ligand>
        <name>FMN</name>
        <dbReference type="ChEBI" id="CHEBI:58210"/>
    </ligand>
</feature>
<feature type="binding site" evidence="1">
    <location>
        <position position="129"/>
    </location>
    <ligand>
        <name>substrate</name>
    </ligand>
</feature>
<feature type="binding site" evidence="1">
    <location>
        <position position="167"/>
    </location>
    <ligand>
        <name>FMN</name>
        <dbReference type="ChEBI" id="CHEBI:58210"/>
    </ligand>
</feature>
<feature type="binding site" evidence="1">
    <location>
        <position position="192"/>
    </location>
    <ligand>
        <name>FMN</name>
        <dbReference type="ChEBI" id="CHEBI:58210"/>
    </ligand>
</feature>
<feature type="binding site" evidence="1">
    <location>
        <begin position="193"/>
        <end position="194"/>
    </location>
    <ligand>
        <name>substrate</name>
    </ligand>
</feature>
<feature type="binding site" evidence="1">
    <location>
        <position position="218"/>
    </location>
    <ligand>
        <name>FMN</name>
        <dbReference type="ChEBI" id="CHEBI:58210"/>
    </ligand>
</feature>
<feature type="binding site" evidence="1">
    <location>
        <begin position="244"/>
        <end position="245"/>
    </location>
    <ligand>
        <name>FMN</name>
        <dbReference type="ChEBI" id="CHEBI:58210"/>
    </ligand>
</feature>
<accession>Q9YFI6</accession>
<dbReference type="EC" id="1.3.98.1"/>
<dbReference type="EMBL" id="BA000002">
    <property type="protein sequence ID" value="BAA79175.2"/>
    <property type="molecule type" value="Genomic_DNA"/>
</dbReference>
<dbReference type="PIR" id="E72784">
    <property type="entry name" value="E72784"/>
</dbReference>
<dbReference type="RefSeq" id="WP_010865610.1">
    <property type="nucleotide sequence ID" value="NC_000854.2"/>
</dbReference>
<dbReference type="SMR" id="Q9YFI6"/>
<dbReference type="STRING" id="272557.APE_0260.1"/>
<dbReference type="EnsemblBacteria" id="BAA79175">
    <property type="protein sequence ID" value="BAA79175"/>
    <property type="gene ID" value="APE_0260.1"/>
</dbReference>
<dbReference type="GeneID" id="1445772"/>
<dbReference type="KEGG" id="ape:APE_0260.1"/>
<dbReference type="PATRIC" id="fig|272557.25.peg.189"/>
<dbReference type="eggNOG" id="arCOG00603">
    <property type="taxonomic scope" value="Archaea"/>
</dbReference>
<dbReference type="UniPathway" id="UPA00070"/>
<dbReference type="Proteomes" id="UP000002518">
    <property type="component" value="Chromosome"/>
</dbReference>
<dbReference type="GO" id="GO:0005737">
    <property type="term" value="C:cytoplasm"/>
    <property type="evidence" value="ECO:0007669"/>
    <property type="project" value="UniProtKB-SubCell"/>
</dbReference>
<dbReference type="GO" id="GO:1990663">
    <property type="term" value="F:dihydroorotate dehydrogenase (fumarate) activity"/>
    <property type="evidence" value="ECO:0007669"/>
    <property type="project" value="UniProtKB-EC"/>
</dbReference>
<dbReference type="GO" id="GO:0006207">
    <property type="term" value="P:'de novo' pyrimidine nucleobase biosynthetic process"/>
    <property type="evidence" value="ECO:0007669"/>
    <property type="project" value="TreeGrafter"/>
</dbReference>
<dbReference type="GO" id="GO:0044205">
    <property type="term" value="P:'de novo' UMP biosynthetic process"/>
    <property type="evidence" value="ECO:0007669"/>
    <property type="project" value="UniProtKB-UniRule"/>
</dbReference>
<dbReference type="FunFam" id="3.20.20.70:FF:000027">
    <property type="entry name" value="Dihydropyrimidine dehydrogenase [NADP(+)]"/>
    <property type="match status" value="1"/>
</dbReference>
<dbReference type="Gene3D" id="3.20.20.70">
    <property type="entry name" value="Aldolase class I"/>
    <property type="match status" value="1"/>
</dbReference>
<dbReference type="HAMAP" id="MF_00224">
    <property type="entry name" value="DHO_dh_type1"/>
    <property type="match status" value="1"/>
</dbReference>
<dbReference type="InterPro" id="IPR013785">
    <property type="entry name" value="Aldolase_TIM"/>
</dbReference>
<dbReference type="InterPro" id="IPR050074">
    <property type="entry name" value="DHO_dehydrogenase"/>
</dbReference>
<dbReference type="InterPro" id="IPR024920">
    <property type="entry name" value="Dihydroorotate_DH_1"/>
</dbReference>
<dbReference type="InterPro" id="IPR012135">
    <property type="entry name" value="Dihydroorotate_DH_1_2"/>
</dbReference>
<dbReference type="InterPro" id="IPR005720">
    <property type="entry name" value="Dihydroorotate_DH_cat"/>
</dbReference>
<dbReference type="InterPro" id="IPR049622">
    <property type="entry name" value="Dihydroorotate_DH_I"/>
</dbReference>
<dbReference type="NCBIfam" id="NF005574">
    <property type="entry name" value="PRK07259.1"/>
    <property type="match status" value="1"/>
</dbReference>
<dbReference type="NCBIfam" id="TIGR01037">
    <property type="entry name" value="pyrD_sub1_fam"/>
    <property type="match status" value="1"/>
</dbReference>
<dbReference type="PANTHER" id="PTHR48109:SF1">
    <property type="entry name" value="DIHYDROOROTATE DEHYDROGENASE (FUMARATE)"/>
    <property type="match status" value="1"/>
</dbReference>
<dbReference type="PANTHER" id="PTHR48109">
    <property type="entry name" value="DIHYDROOROTATE DEHYDROGENASE (QUINONE), MITOCHONDRIAL-RELATED"/>
    <property type="match status" value="1"/>
</dbReference>
<dbReference type="Pfam" id="PF01180">
    <property type="entry name" value="DHO_dh"/>
    <property type="match status" value="1"/>
</dbReference>
<dbReference type="PIRSF" id="PIRSF000164">
    <property type="entry name" value="DHO_oxidase"/>
    <property type="match status" value="1"/>
</dbReference>
<dbReference type="SUPFAM" id="SSF51395">
    <property type="entry name" value="FMN-linked oxidoreductases"/>
    <property type="match status" value="1"/>
</dbReference>